<proteinExistence type="evidence at transcript level"/>
<organism>
    <name type="scientific">Feline sarcoma virus (strain Hardy-Zuckerman 2)</name>
    <dbReference type="NCBI Taxonomy" id="11776"/>
    <lineage>
        <taxon>Viruses</taxon>
        <taxon>Riboviria</taxon>
        <taxon>Pararnavirae</taxon>
        <taxon>Artverviricota</taxon>
        <taxon>Revtraviricetes</taxon>
        <taxon>Ortervirales</taxon>
        <taxon>Retroviridae</taxon>
        <taxon>Orthoretrovirinae</taxon>
        <taxon>Gammaretrovirus</taxon>
        <taxon>Hardy-Zuckerman feline sarcoma virus</taxon>
    </lineage>
</organism>
<dbReference type="EC" id="2.7.10.2"/>
<dbReference type="EMBL" id="M15805">
    <property type="protein sequence ID" value="AAA43042.1"/>
    <property type="molecule type" value="mRNA"/>
</dbReference>
<dbReference type="PIR" id="A26132">
    <property type="entry name" value="A26132"/>
</dbReference>
<dbReference type="BMRB" id="P10447"/>
<dbReference type="SMR" id="P10447"/>
<dbReference type="BRENDA" id="2.7.10.2">
    <property type="organism ID" value="2234"/>
</dbReference>
<dbReference type="GO" id="GO:0005524">
    <property type="term" value="F:ATP binding"/>
    <property type="evidence" value="ECO:0007669"/>
    <property type="project" value="UniProtKB-KW"/>
</dbReference>
<dbReference type="GO" id="GO:0004715">
    <property type="term" value="F:non-membrane spanning protein tyrosine kinase activity"/>
    <property type="evidence" value="ECO:0007669"/>
    <property type="project" value="UniProtKB-EC"/>
</dbReference>
<dbReference type="CDD" id="cd05052">
    <property type="entry name" value="PTKc_Abl"/>
    <property type="match status" value="1"/>
</dbReference>
<dbReference type="CDD" id="cd09935">
    <property type="entry name" value="SH2_ABL"/>
    <property type="match status" value="1"/>
</dbReference>
<dbReference type="CDD" id="cd11850">
    <property type="entry name" value="SH3_Abl"/>
    <property type="match status" value="1"/>
</dbReference>
<dbReference type="FunFam" id="1.10.510.10:FF:000070">
    <property type="entry name" value="Tyrosine-protein kinase"/>
    <property type="match status" value="1"/>
</dbReference>
<dbReference type="FunFam" id="2.30.30.40:FF:000010">
    <property type="entry name" value="Tyrosine-protein kinase"/>
    <property type="match status" value="1"/>
</dbReference>
<dbReference type="FunFam" id="3.30.200.20:FF:000037">
    <property type="entry name" value="Tyrosine-protein kinase"/>
    <property type="match status" value="1"/>
</dbReference>
<dbReference type="FunFam" id="3.30.505.10:FF:000004">
    <property type="entry name" value="Tyrosine-protein kinase"/>
    <property type="match status" value="1"/>
</dbReference>
<dbReference type="Gene3D" id="3.30.200.20">
    <property type="entry name" value="Phosphorylase Kinase, domain 1"/>
    <property type="match status" value="1"/>
</dbReference>
<dbReference type="Gene3D" id="3.30.505.10">
    <property type="entry name" value="SH2 domain"/>
    <property type="match status" value="1"/>
</dbReference>
<dbReference type="Gene3D" id="2.30.30.40">
    <property type="entry name" value="SH3 Domains"/>
    <property type="match status" value="1"/>
</dbReference>
<dbReference type="Gene3D" id="1.10.510.10">
    <property type="entry name" value="Transferase(Phosphotransferase) domain 1"/>
    <property type="match status" value="1"/>
</dbReference>
<dbReference type="InterPro" id="IPR035837">
    <property type="entry name" value="ABL_SH2"/>
</dbReference>
<dbReference type="InterPro" id="IPR011009">
    <property type="entry name" value="Kinase-like_dom_sf"/>
</dbReference>
<dbReference type="InterPro" id="IPR050198">
    <property type="entry name" value="Non-receptor_tyrosine_kinases"/>
</dbReference>
<dbReference type="InterPro" id="IPR000719">
    <property type="entry name" value="Prot_kinase_dom"/>
</dbReference>
<dbReference type="InterPro" id="IPR017441">
    <property type="entry name" value="Protein_kinase_ATP_BS"/>
</dbReference>
<dbReference type="InterPro" id="IPR001245">
    <property type="entry name" value="Ser-Thr/Tyr_kinase_cat_dom"/>
</dbReference>
<dbReference type="InterPro" id="IPR000980">
    <property type="entry name" value="SH2"/>
</dbReference>
<dbReference type="InterPro" id="IPR036860">
    <property type="entry name" value="SH2_dom_sf"/>
</dbReference>
<dbReference type="InterPro" id="IPR036028">
    <property type="entry name" value="SH3-like_dom_sf"/>
</dbReference>
<dbReference type="InterPro" id="IPR001452">
    <property type="entry name" value="SH3_domain"/>
</dbReference>
<dbReference type="InterPro" id="IPR008266">
    <property type="entry name" value="Tyr_kinase_AS"/>
</dbReference>
<dbReference type="InterPro" id="IPR020635">
    <property type="entry name" value="Tyr_kinase_cat_dom"/>
</dbReference>
<dbReference type="PANTHER" id="PTHR24418">
    <property type="entry name" value="TYROSINE-PROTEIN KINASE"/>
    <property type="match status" value="1"/>
</dbReference>
<dbReference type="Pfam" id="PF07714">
    <property type="entry name" value="PK_Tyr_Ser-Thr"/>
    <property type="match status" value="1"/>
</dbReference>
<dbReference type="Pfam" id="PF00017">
    <property type="entry name" value="SH2"/>
    <property type="match status" value="1"/>
</dbReference>
<dbReference type="Pfam" id="PF00018">
    <property type="entry name" value="SH3_1"/>
    <property type="match status" value="1"/>
</dbReference>
<dbReference type="PRINTS" id="PR00401">
    <property type="entry name" value="SH2DOMAIN"/>
</dbReference>
<dbReference type="PRINTS" id="PR00452">
    <property type="entry name" value="SH3DOMAIN"/>
</dbReference>
<dbReference type="PRINTS" id="PR00109">
    <property type="entry name" value="TYRKINASE"/>
</dbReference>
<dbReference type="SMART" id="SM00252">
    <property type="entry name" value="SH2"/>
    <property type="match status" value="1"/>
</dbReference>
<dbReference type="SMART" id="SM00326">
    <property type="entry name" value="SH3"/>
    <property type="match status" value="1"/>
</dbReference>
<dbReference type="SMART" id="SM00219">
    <property type="entry name" value="TyrKc"/>
    <property type="match status" value="1"/>
</dbReference>
<dbReference type="SUPFAM" id="SSF56112">
    <property type="entry name" value="Protein kinase-like (PK-like)"/>
    <property type="match status" value="1"/>
</dbReference>
<dbReference type="SUPFAM" id="SSF55550">
    <property type="entry name" value="SH2 domain"/>
    <property type="match status" value="1"/>
</dbReference>
<dbReference type="SUPFAM" id="SSF50044">
    <property type="entry name" value="SH3-domain"/>
    <property type="match status" value="1"/>
</dbReference>
<dbReference type="PROSITE" id="PS00107">
    <property type="entry name" value="PROTEIN_KINASE_ATP"/>
    <property type="match status" value="1"/>
</dbReference>
<dbReference type="PROSITE" id="PS50011">
    <property type="entry name" value="PROTEIN_KINASE_DOM"/>
    <property type="match status" value="1"/>
</dbReference>
<dbReference type="PROSITE" id="PS00109">
    <property type="entry name" value="PROTEIN_KINASE_TYR"/>
    <property type="match status" value="1"/>
</dbReference>
<dbReference type="PROSITE" id="PS50001">
    <property type="entry name" value="SH2"/>
    <property type="match status" value="1"/>
</dbReference>
<dbReference type="PROSITE" id="PS50002">
    <property type="entry name" value="SH3"/>
    <property type="match status" value="1"/>
</dbReference>
<gene>
    <name type="primary">ABL</name>
</gene>
<feature type="chain" id="PRO_0000088056" description="Tyrosine-protein kinase transforming protein Abl">
    <location>
        <begin position="1"/>
        <end position="439"/>
    </location>
</feature>
<feature type="domain" description="SH3" evidence="4">
    <location>
        <begin position="10"/>
        <end position="70"/>
    </location>
</feature>
<feature type="domain" description="SH2" evidence="3">
    <location>
        <begin position="76"/>
        <end position="166"/>
    </location>
</feature>
<feature type="domain" description="Protein kinase" evidence="2">
    <location>
        <begin position="191"/>
        <end position="439"/>
    </location>
</feature>
<feature type="short sequence motif" description="Kinase activation loop" evidence="1">
    <location>
        <begin position="330"/>
        <end position="354"/>
    </location>
</feature>
<feature type="active site" description="Proton acceptor" evidence="2 5">
    <location>
        <position position="312"/>
    </location>
</feature>
<feature type="binding site" evidence="2">
    <location>
        <begin position="197"/>
        <end position="205"/>
    </location>
    <ligand>
        <name>ATP</name>
        <dbReference type="ChEBI" id="CHEBI:30616"/>
    </ligand>
</feature>
<feature type="binding site" evidence="2">
    <location>
        <position position="220"/>
    </location>
    <ligand>
        <name>ATP</name>
        <dbReference type="ChEBI" id="CHEBI:30616"/>
    </ligand>
</feature>
<feature type="binding site" evidence="2">
    <location>
        <begin position="265"/>
        <end position="271"/>
    </location>
    <ligand>
        <name>ATP</name>
        <dbReference type="ChEBI" id="CHEBI:30616"/>
    </ligand>
</feature>
<protein>
    <recommendedName>
        <fullName>Tyrosine-protein kinase transforming protein Abl</fullName>
        <ecNumber>2.7.10.2</ecNumber>
    </recommendedName>
    <alternativeName>
        <fullName>V-abl</fullName>
    </alternativeName>
</protein>
<reference key="1">
    <citation type="journal article" date="1987" name="J. Virol.">
        <title>Nucleic acid sequence and oncogenic properties of the HZ2 feline sarcoma virus v-abl insert.</title>
        <authorList>
            <person name="Bergold P.J."/>
            <person name="Blumenthal J.A."/>
            <person name="D'Andrea E."/>
            <person name="Snyder H.W. Jr."/>
            <person name="Lederman L."/>
            <person name="Silverstone A."/>
            <person name="Nguyen H."/>
            <person name="Besmer P."/>
        </authorList>
    </citation>
    <scope>NUCLEOTIDE SEQUENCE [MRNA]</scope>
</reference>
<keyword id="KW-0067">ATP-binding</keyword>
<keyword id="KW-0418">Kinase</keyword>
<keyword id="KW-0547">Nucleotide-binding</keyword>
<keyword id="KW-0553">Oncogene</keyword>
<keyword id="KW-0727">SH2 domain</keyword>
<keyword id="KW-0728">SH3 domain</keyword>
<keyword id="KW-0808">Transferase</keyword>
<keyword id="KW-0829">Tyrosine-protein kinase</keyword>
<accession>P10447</accession>
<evidence type="ECO:0000250" key="1"/>
<evidence type="ECO:0000255" key="2">
    <source>
        <dbReference type="PROSITE-ProRule" id="PRU00159"/>
    </source>
</evidence>
<evidence type="ECO:0000255" key="3">
    <source>
        <dbReference type="PROSITE-ProRule" id="PRU00191"/>
    </source>
</evidence>
<evidence type="ECO:0000255" key="4">
    <source>
        <dbReference type="PROSITE-ProRule" id="PRU00192"/>
    </source>
</evidence>
<evidence type="ECO:0000255" key="5">
    <source>
        <dbReference type="PROSITE-ProRule" id="PRU10028"/>
    </source>
</evidence>
<name>ABL_FSVHY</name>
<organismHost>
    <name type="scientific">Felidae</name>
    <name type="common">cat family</name>
    <dbReference type="NCBI Taxonomy" id="9681"/>
</organismHost>
<comment type="catalytic activity">
    <reaction evidence="5">
        <text>L-tyrosyl-[protein] + ATP = O-phospho-L-tyrosyl-[protein] + ADP + H(+)</text>
        <dbReference type="Rhea" id="RHEA:10596"/>
        <dbReference type="Rhea" id="RHEA-COMP:10136"/>
        <dbReference type="Rhea" id="RHEA-COMP:20101"/>
        <dbReference type="ChEBI" id="CHEBI:15378"/>
        <dbReference type="ChEBI" id="CHEBI:30616"/>
        <dbReference type="ChEBI" id="CHEBI:46858"/>
        <dbReference type="ChEBI" id="CHEBI:61978"/>
        <dbReference type="ChEBI" id="CHEBI:456216"/>
        <dbReference type="EC" id="2.7.10.2"/>
    </reaction>
</comment>
<comment type="miscellaneous">
    <text>This protein is synthesized as a Gag-Abl-Pol polyprotein.</text>
</comment>
<comment type="similarity">
    <text evidence="2">Belongs to the protein kinase superfamily. Tyr protein kinase family. ABL subfamily.</text>
</comment>
<sequence>ENLLAGPSENDPNLFVALYDFVASGDNTLSITKGEKLRVLGYNHNGEWCEAQTKNGQGWVPSNYITPVNSLEKHSWYHGPVSRNAAEYLLSSGINGSFLVRESESSPGQRSISLRYEGRVYHYRINTASDGKLYVSPESRFNTLAELVHHHSTVADGLITTLHYPAPKRNKPTVYGVSPNYDKWEMERTDITMKHKLGGGQYGEVYEGVWKKYSLTVAVKTLKEDTMEVEEFLKEAAVMKEIKHPNLVQLLGVCTREPPFYIITEFMTYGNLLDYLRECNRQEVNAVVLLYMATQISSAMEYLEKKNFIHRDLAARNCLVGENHLVKVADFGLSRLMTGDTYTAHAGTKFPIKWTAPESLAYNKFSIKSDVWAFGVLLWEIATYGMSPYPGIDLSQVYELLEKDYRMERPEGCPEKVYELMRACWQWNPSDRPAFAEIH</sequence>